<dbReference type="EC" id="2.7.7.6" evidence="1"/>
<dbReference type="EMBL" id="CP000951">
    <property type="protein sequence ID" value="ACB00030.1"/>
    <property type="molecule type" value="Genomic_DNA"/>
</dbReference>
<dbReference type="RefSeq" id="WP_012307652.1">
    <property type="nucleotide sequence ID" value="NZ_JAHHPU010000002.1"/>
</dbReference>
<dbReference type="SMR" id="B1XHW1"/>
<dbReference type="STRING" id="32049.SYNPCC7002_A2043"/>
<dbReference type="KEGG" id="syp:SYNPCC7002_A2043"/>
<dbReference type="eggNOG" id="COG0086">
    <property type="taxonomic scope" value="Bacteria"/>
</dbReference>
<dbReference type="HOGENOM" id="CLU_000524_1_0_3"/>
<dbReference type="Proteomes" id="UP000001688">
    <property type="component" value="Chromosome"/>
</dbReference>
<dbReference type="GO" id="GO:0000428">
    <property type="term" value="C:DNA-directed RNA polymerase complex"/>
    <property type="evidence" value="ECO:0007669"/>
    <property type="project" value="UniProtKB-KW"/>
</dbReference>
<dbReference type="GO" id="GO:0003677">
    <property type="term" value="F:DNA binding"/>
    <property type="evidence" value="ECO:0007669"/>
    <property type="project" value="UniProtKB-UniRule"/>
</dbReference>
<dbReference type="GO" id="GO:0003899">
    <property type="term" value="F:DNA-directed RNA polymerase activity"/>
    <property type="evidence" value="ECO:0007669"/>
    <property type="project" value="UniProtKB-UniRule"/>
</dbReference>
<dbReference type="GO" id="GO:0008270">
    <property type="term" value="F:zinc ion binding"/>
    <property type="evidence" value="ECO:0007669"/>
    <property type="project" value="UniProtKB-UniRule"/>
</dbReference>
<dbReference type="GO" id="GO:0006351">
    <property type="term" value="P:DNA-templated transcription"/>
    <property type="evidence" value="ECO:0007669"/>
    <property type="project" value="UniProtKB-UniRule"/>
</dbReference>
<dbReference type="CDD" id="cd02655">
    <property type="entry name" value="RNAP_beta'_C"/>
    <property type="match status" value="1"/>
</dbReference>
<dbReference type="FunFam" id="1.10.150.390:FF:000002">
    <property type="entry name" value="DNA-directed RNA polymerase subunit beta"/>
    <property type="match status" value="1"/>
</dbReference>
<dbReference type="Gene3D" id="1.10.132.30">
    <property type="match status" value="1"/>
</dbReference>
<dbReference type="Gene3D" id="1.10.150.390">
    <property type="match status" value="1"/>
</dbReference>
<dbReference type="Gene3D" id="1.10.1790.20">
    <property type="match status" value="1"/>
</dbReference>
<dbReference type="Gene3D" id="2.40.50.100">
    <property type="match status" value="2"/>
</dbReference>
<dbReference type="Gene3D" id="1.10.274.100">
    <property type="entry name" value="RNA polymerase Rpb1, domain 3"/>
    <property type="match status" value="1"/>
</dbReference>
<dbReference type="HAMAP" id="MF_01324">
    <property type="entry name" value="RNApol_bact_RpoC2"/>
    <property type="match status" value="1"/>
</dbReference>
<dbReference type="InterPro" id="IPR012756">
    <property type="entry name" value="DNA-dir_RpoC2_beta_pp"/>
</dbReference>
<dbReference type="InterPro" id="IPR045867">
    <property type="entry name" value="DNA-dir_RpoC_beta_prime"/>
</dbReference>
<dbReference type="InterPro" id="IPR042102">
    <property type="entry name" value="RNA_pol_Rpb1_3_sf"/>
</dbReference>
<dbReference type="InterPro" id="IPR007083">
    <property type="entry name" value="RNA_pol_Rpb1_4"/>
</dbReference>
<dbReference type="InterPro" id="IPR007081">
    <property type="entry name" value="RNA_pol_Rpb1_5"/>
</dbReference>
<dbReference type="InterPro" id="IPR038120">
    <property type="entry name" value="Rpb1_funnel_sf"/>
</dbReference>
<dbReference type="NCBIfam" id="NF002724">
    <property type="entry name" value="PRK02597.1"/>
    <property type="match status" value="1"/>
</dbReference>
<dbReference type="NCBIfam" id="TIGR02388">
    <property type="entry name" value="rpoC2_cyan"/>
    <property type="match status" value="1"/>
</dbReference>
<dbReference type="PANTHER" id="PTHR19376">
    <property type="entry name" value="DNA-DIRECTED RNA POLYMERASE"/>
    <property type="match status" value="1"/>
</dbReference>
<dbReference type="Pfam" id="PF05000">
    <property type="entry name" value="RNA_pol_Rpb1_4"/>
    <property type="match status" value="1"/>
</dbReference>
<dbReference type="Pfam" id="PF04998">
    <property type="entry name" value="RNA_pol_Rpb1_5"/>
    <property type="match status" value="2"/>
</dbReference>
<dbReference type="SUPFAM" id="SSF64484">
    <property type="entry name" value="beta and beta-prime subunits of DNA dependent RNA-polymerase"/>
    <property type="match status" value="1"/>
</dbReference>
<reference key="1">
    <citation type="submission" date="2008-02" db="EMBL/GenBank/DDBJ databases">
        <title>Complete sequence of Synechococcus sp. PCC 7002.</title>
        <authorList>
            <person name="Li T."/>
            <person name="Zhao J."/>
            <person name="Zhao C."/>
            <person name="Liu Z."/>
            <person name="Zhao F."/>
            <person name="Marquardt J."/>
            <person name="Nomura C.T."/>
            <person name="Persson S."/>
            <person name="Detter J.C."/>
            <person name="Richardson P.M."/>
            <person name="Lanz C."/>
            <person name="Schuster S.C."/>
            <person name="Wang J."/>
            <person name="Li S."/>
            <person name="Huang X."/>
            <person name="Cai T."/>
            <person name="Yu Z."/>
            <person name="Luo J."/>
            <person name="Zhao J."/>
            <person name="Bryant D.A."/>
        </authorList>
    </citation>
    <scope>NUCLEOTIDE SEQUENCE [LARGE SCALE GENOMIC DNA]</scope>
    <source>
        <strain>ATCC 27264 / PCC 7002 / PR-6</strain>
    </source>
</reference>
<gene>
    <name evidence="1" type="primary">rpoC2</name>
    <name type="ordered locus">SYNPCC7002_A2043</name>
</gene>
<proteinExistence type="inferred from homology"/>
<feature type="chain" id="PRO_0000353533" description="DNA-directed RNA polymerase subunit beta'">
    <location>
        <begin position="1"/>
        <end position="1331"/>
    </location>
</feature>
<feature type="region of interest" description="Disordered" evidence="2">
    <location>
        <begin position="1236"/>
        <end position="1257"/>
    </location>
</feature>
<feature type="region of interest" description="Disordered" evidence="2">
    <location>
        <begin position="1294"/>
        <end position="1331"/>
    </location>
</feature>
<feature type="compositionally biased region" description="Polar residues" evidence="2">
    <location>
        <begin position="1243"/>
        <end position="1257"/>
    </location>
</feature>
<feature type="binding site" evidence="1">
    <location>
        <position position="220"/>
    </location>
    <ligand>
        <name>Zn(2+)</name>
        <dbReference type="ChEBI" id="CHEBI:29105"/>
    </ligand>
</feature>
<feature type="binding site" evidence="1">
    <location>
        <position position="293"/>
    </location>
    <ligand>
        <name>Zn(2+)</name>
        <dbReference type="ChEBI" id="CHEBI:29105"/>
    </ligand>
</feature>
<feature type="binding site" evidence="1">
    <location>
        <position position="300"/>
    </location>
    <ligand>
        <name>Zn(2+)</name>
        <dbReference type="ChEBI" id="CHEBI:29105"/>
    </ligand>
</feature>
<feature type="binding site" evidence="1">
    <location>
        <position position="303"/>
    </location>
    <ligand>
        <name>Zn(2+)</name>
        <dbReference type="ChEBI" id="CHEBI:29105"/>
    </ligand>
</feature>
<comment type="function">
    <text evidence="1">DNA-dependent RNA polymerase catalyzes the transcription of DNA into RNA using the four ribonucleoside triphosphates as substrates.</text>
</comment>
<comment type="catalytic activity">
    <reaction evidence="1">
        <text>RNA(n) + a ribonucleoside 5'-triphosphate = RNA(n+1) + diphosphate</text>
        <dbReference type="Rhea" id="RHEA:21248"/>
        <dbReference type="Rhea" id="RHEA-COMP:14527"/>
        <dbReference type="Rhea" id="RHEA-COMP:17342"/>
        <dbReference type="ChEBI" id="CHEBI:33019"/>
        <dbReference type="ChEBI" id="CHEBI:61557"/>
        <dbReference type="ChEBI" id="CHEBI:140395"/>
        <dbReference type="EC" id="2.7.7.6"/>
    </reaction>
</comment>
<comment type="cofactor">
    <cofactor evidence="1">
        <name>Zn(2+)</name>
        <dbReference type="ChEBI" id="CHEBI:29105"/>
    </cofactor>
    <text evidence="1">Binds 1 Zn(2+) ion per subunit.</text>
</comment>
<comment type="subunit">
    <text evidence="1">In cyanobacteria the RNAP catalytic core is composed of 2 alpha, 1 beta, 1 beta', 1 gamma and 1 omega subunit. When a sigma factor is associated with the core the holoenzyme is formed, which can initiate transcription.</text>
</comment>
<comment type="similarity">
    <text evidence="1">Belongs to the RNA polymerase beta' chain family. RpoC2 subfamily.</text>
</comment>
<protein>
    <recommendedName>
        <fullName evidence="1">DNA-directed RNA polymerase subunit beta'</fullName>
        <shortName evidence="1">RNAP subunit beta'</shortName>
        <ecNumber evidence="1">2.7.7.6</ecNumber>
    </recommendedName>
    <alternativeName>
        <fullName evidence="1">RNA polymerase subunit beta'</fullName>
    </alternativeName>
    <alternativeName>
        <fullName evidence="1">Transcriptase subunit beta'</fullName>
    </alternativeName>
</protein>
<evidence type="ECO:0000255" key="1">
    <source>
        <dbReference type="HAMAP-Rule" id="MF_01324"/>
    </source>
</evidence>
<evidence type="ECO:0000256" key="2">
    <source>
        <dbReference type="SAM" id="MobiDB-lite"/>
    </source>
</evidence>
<name>RPOC2_PICP2</name>
<accession>B1XHW1</accession>
<sequence length="1331" mass="145422">MTKEKPAVFYNRIIDKGRLKKLMSWAYTSFGSAHCATMADELKTLGFRYATQAGVSISVDDLQVPPIKRQMLDSAEQEIKTTEARYSRGEITEVERFQKVIDTWNSTSESLKDEVVKNFRETNPLNSVYMMAFSGARGNLSQVRQLVGMRGLMADPQGEIIDLPIKTNFREGLTVTEYIISSYGARKGLVDTALRTADSGYLTRRLVDVSQDVIVREEDCGTARGLKLRAMTDGEREQISLEDRLFGRVLNADVVDPKTGEVIAQRNQDIDADLAKKIATTVAEVEVRSPLTCEAARSVCRKCYGWSLAHGHMVDMGEAVGIIAAQSIGEPGTQLTMRTFHTGGVFTKEAARTIKASKAGTIQFKDGLSTRRMRTPHGDEVEQVEVAGTLVLKPSDNGKMVSHALSPGSFVLVAEGASVKKGDLLVEVGAGQKTQKSTERATKDVSSDLAGEVLFDNLIAEEKTDRQGNTTRSAQRSGLMWVLAGDVYNLPAGAEPVVENGTHVNVGDILAETKLVSLSGGVVRLIPNSREIEIVTASVLLDEAKVLHETGGGSEQYIIETSKGDQFLLKTAPGTKVQNNANIAELIDDRYRTTTGGIIKYSGVEVAKGTKKQGYEVLKGGTLLWIPEETHEVNKDSSLRIVEDGQYVEAGTEVVKDIFSQSAGVAEVIEKNDILREVIIKPGELHLTEEAIADKYHEQLIQPGEEVIPGVTIDKLSYGEKVISTEGVALLVRPVEEFQVEDTPVEPSQGSINEQGAGRNIELHAVQRLFFKDGERVKSVDGVSLLSTQLIIEIGAIEGEDEDVLANLYADIELQDDPTDDEVKRLQLVILESLILRRDSDSDPFGGQVQTRLMVEDGQEIVPGAVVARTEIQCKEPGEVRGIRSGQEAIRRLLIVRDSDRQTLAIDGKAKVKENTLVVAGTEIAEGVVIEDSAQVLKVSDKEIVLRHARPYRVSGGAVLHIDEGDLVQRGDNLVLLVFERAKTGDIIQGLPRIEELLEARKPKEAAVLARRPGTCQVEYLDDETVDVKVIEDDGVISEYPVSLNQSVMVVDGQRVGPAEPLTDGLNNPHEILEIFFDYYAESKGIYEAALIGLRESQRFLVEEVQRVYQSQGIDISDKHIEVIVRQMTAKVRIDDGGDTTMLPGELIELRQVEQVNEAMSITGGAPARYTPVLLGITKASLNTDSFISAASFQETTRVLTEAAIEGKSDWLRGLKENVIIGRLIPAGTGFASQNDFVDEGTSRSPNGYSNVVTNDNGAGLSSRTYDDLDGSEILDDQTARAFTEGKSNRKDIISGDELISDDTPIPSDVQGKAPVIDDDAMIDDNWMKDQ</sequence>
<keyword id="KW-0240">DNA-directed RNA polymerase</keyword>
<keyword id="KW-0479">Metal-binding</keyword>
<keyword id="KW-0548">Nucleotidyltransferase</keyword>
<keyword id="KW-1185">Reference proteome</keyword>
<keyword id="KW-0804">Transcription</keyword>
<keyword id="KW-0808">Transferase</keyword>
<keyword id="KW-0862">Zinc</keyword>
<organism>
    <name type="scientific">Picosynechococcus sp. (strain ATCC 27264 / PCC 7002 / PR-6)</name>
    <name type="common">Agmenellum quadruplicatum</name>
    <dbReference type="NCBI Taxonomy" id="32049"/>
    <lineage>
        <taxon>Bacteria</taxon>
        <taxon>Bacillati</taxon>
        <taxon>Cyanobacteriota</taxon>
        <taxon>Cyanophyceae</taxon>
        <taxon>Oscillatoriophycideae</taxon>
        <taxon>Chroococcales</taxon>
        <taxon>Geminocystaceae</taxon>
        <taxon>Picosynechococcus</taxon>
    </lineage>
</organism>